<reference key="1">
    <citation type="submission" date="2006-04" db="EMBL/GenBank/DDBJ databases">
        <title>Complete sequence of chromosome of Deinococcus geothermalis DSM 11300.</title>
        <authorList>
            <person name="Copeland A."/>
            <person name="Lucas S."/>
            <person name="Lapidus A."/>
            <person name="Barry K."/>
            <person name="Detter J.C."/>
            <person name="Glavina del Rio T."/>
            <person name="Hammon N."/>
            <person name="Israni S."/>
            <person name="Dalin E."/>
            <person name="Tice H."/>
            <person name="Pitluck S."/>
            <person name="Brettin T."/>
            <person name="Bruce D."/>
            <person name="Han C."/>
            <person name="Tapia R."/>
            <person name="Saunders E."/>
            <person name="Gilna P."/>
            <person name="Schmutz J."/>
            <person name="Larimer F."/>
            <person name="Land M."/>
            <person name="Hauser L."/>
            <person name="Kyrpides N."/>
            <person name="Kim E."/>
            <person name="Daly M.J."/>
            <person name="Fredrickson J.K."/>
            <person name="Makarova K.S."/>
            <person name="Gaidamakova E.K."/>
            <person name="Zhai M."/>
            <person name="Richardson P."/>
        </authorList>
    </citation>
    <scope>NUCLEOTIDE SEQUENCE [LARGE SCALE GENOMIC DNA]</scope>
    <source>
        <strain>DSM 11300 / CIP 105573 / AG-3a</strain>
    </source>
</reference>
<sequence length="406" mass="42269">MLLAEIISVGTELLLGEIVDSNAAFLARELAARGITLHRKVVLGDNLKRLAEGLRTALARADLVIVGGGLGPTDDDLTREAIAEVLEETPTEDPALLAWLEGLYAARGRPMPQVNRKQAWLIPSAQALPNPVGTAPGWFVRTGGKIIVALPGPPRELQRMWREQVLPRLPLPDHALFAVTLHTQGIGESNIAELLGDLTKAANPSVATYARQTGVDVRVAASAPTAEEARALAAPVLDTVRHILARWIWGEDGDTLAGAVTQTLGGRTLGVIEAGSGGALCLLLADQPGFLDAAVTVDHARLITLGLTPVTLGSVGVVSEAAARELAAGAREHLGAEVGLAVVTATAGEQAGQAFVALSAENAENVAHVNWPGDPAQIRERAAVAALALAYRTLRLPQPSGKAGHA</sequence>
<name>CINAL_DEIGD</name>
<evidence type="ECO:0000255" key="1">
    <source>
        <dbReference type="HAMAP-Rule" id="MF_00226"/>
    </source>
</evidence>
<gene>
    <name type="ordered locus">Dgeo_2136</name>
</gene>
<organism>
    <name type="scientific">Deinococcus geothermalis (strain DSM 11300 / CIP 105573 / AG-3a)</name>
    <dbReference type="NCBI Taxonomy" id="319795"/>
    <lineage>
        <taxon>Bacteria</taxon>
        <taxon>Thermotogati</taxon>
        <taxon>Deinococcota</taxon>
        <taxon>Deinococci</taxon>
        <taxon>Deinococcales</taxon>
        <taxon>Deinococcaceae</taxon>
        <taxon>Deinococcus</taxon>
    </lineage>
</organism>
<feature type="chain" id="PRO_1000058705" description="CinA-like protein">
    <location>
        <begin position="1"/>
        <end position="406"/>
    </location>
</feature>
<dbReference type="EMBL" id="CP000359">
    <property type="protein sequence ID" value="ABF46430.1"/>
    <property type="molecule type" value="Genomic_DNA"/>
</dbReference>
<dbReference type="RefSeq" id="WP_011531255.1">
    <property type="nucleotide sequence ID" value="NC_008025.1"/>
</dbReference>
<dbReference type="SMR" id="Q1IWF4"/>
<dbReference type="STRING" id="319795.Dgeo_2136"/>
<dbReference type="KEGG" id="dge:Dgeo_2136"/>
<dbReference type="eggNOG" id="COG1058">
    <property type="taxonomic scope" value="Bacteria"/>
</dbReference>
<dbReference type="eggNOG" id="COG1546">
    <property type="taxonomic scope" value="Bacteria"/>
</dbReference>
<dbReference type="HOGENOM" id="CLU_030805_9_3_0"/>
<dbReference type="Proteomes" id="UP000002431">
    <property type="component" value="Chromosome"/>
</dbReference>
<dbReference type="CDD" id="cd00885">
    <property type="entry name" value="cinA"/>
    <property type="match status" value="1"/>
</dbReference>
<dbReference type="Gene3D" id="3.30.70.2860">
    <property type="match status" value="1"/>
</dbReference>
<dbReference type="Gene3D" id="3.90.950.20">
    <property type="entry name" value="CinA-like"/>
    <property type="match status" value="1"/>
</dbReference>
<dbReference type="Gene3D" id="3.40.980.10">
    <property type="entry name" value="MoaB/Mog-like domain"/>
    <property type="match status" value="1"/>
</dbReference>
<dbReference type="HAMAP" id="MF_00226_B">
    <property type="entry name" value="CinA_B"/>
    <property type="match status" value="1"/>
</dbReference>
<dbReference type="InterPro" id="IPR050101">
    <property type="entry name" value="CinA"/>
</dbReference>
<dbReference type="InterPro" id="IPR036653">
    <property type="entry name" value="CinA-like_C"/>
</dbReference>
<dbReference type="InterPro" id="IPR008136">
    <property type="entry name" value="CinA_C"/>
</dbReference>
<dbReference type="InterPro" id="IPR041424">
    <property type="entry name" value="CinA_KH"/>
</dbReference>
<dbReference type="InterPro" id="IPR008135">
    <property type="entry name" value="Competence-induced_CinA"/>
</dbReference>
<dbReference type="InterPro" id="IPR036425">
    <property type="entry name" value="MoaB/Mog-like_dom_sf"/>
</dbReference>
<dbReference type="InterPro" id="IPR001453">
    <property type="entry name" value="MoaB/Mog_dom"/>
</dbReference>
<dbReference type="NCBIfam" id="TIGR00200">
    <property type="entry name" value="cinA_nterm"/>
    <property type="match status" value="1"/>
</dbReference>
<dbReference type="NCBIfam" id="TIGR00177">
    <property type="entry name" value="molyb_syn"/>
    <property type="match status" value="1"/>
</dbReference>
<dbReference type="PANTHER" id="PTHR13939">
    <property type="entry name" value="NICOTINAMIDE-NUCLEOTIDE AMIDOHYDROLASE PNCC"/>
    <property type="match status" value="1"/>
</dbReference>
<dbReference type="PANTHER" id="PTHR13939:SF0">
    <property type="entry name" value="NMN AMIDOHYDROLASE-LIKE PROTEIN YFAY"/>
    <property type="match status" value="1"/>
</dbReference>
<dbReference type="Pfam" id="PF02464">
    <property type="entry name" value="CinA"/>
    <property type="match status" value="1"/>
</dbReference>
<dbReference type="Pfam" id="PF18146">
    <property type="entry name" value="CinA_KH"/>
    <property type="match status" value="1"/>
</dbReference>
<dbReference type="Pfam" id="PF00994">
    <property type="entry name" value="MoCF_biosynth"/>
    <property type="match status" value="1"/>
</dbReference>
<dbReference type="PIRSF" id="PIRSF006728">
    <property type="entry name" value="CinA"/>
    <property type="match status" value="1"/>
</dbReference>
<dbReference type="SMART" id="SM00852">
    <property type="entry name" value="MoCF_biosynth"/>
    <property type="match status" value="1"/>
</dbReference>
<dbReference type="SUPFAM" id="SSF142433">
    <property type="entry name" value="CinA-like"/>
    <property type="match status" value="1"/>
</dbReference>
<dbReference type="SUPFAM" id="SSF53218">
    <property type="entry name" value="Molybdenum cofactor biosynthesis proteins"/>
    <property type="match status" value="1"/>
</dbReference>
<proteinExistence type="inferred from homology"/>
<protein>
    <recommendedName>
        <fullName evidence="1">CinA-like protein</fullName>
    </recommendedName>
</protein>
<accession>Q1IWF4</accession>
<comment type="similarity">
    <text evidence="1">Belongs to the CinA family.</text>
</comment>